<gene>
    <name type="ORF">CBG06644</name>
</gene>
<protein>
    <recommendedName>
        <fullName>Zinc finger protein-like 1 homolog</fullName>
    </recommendedName>
</protein>
<dbReference type="EMBL" id="HE601320">
    <property type="protein sequence ID" value="CAP26922.1"/>
    <property type="molecule type" value="Genomic_DNA"/>
</dbReference>
<dbReference type="RefSeq" id="XP_002647558.1">
    <property type="nucleotide sequence ID" value="XM_002647512.1"/>
</dbReference>
<dbReference type="FunCoup" id="A8X2R2">
    <property type="interactions" value="2700"/>
</dbReference>
<dbReference type="STRING" id="6238.A8X2R2"/>
<dbReference type="EnsemblMetazoa" id="CBG06644.1">
    <property type="protein sequence ID" value="CBG06644.1"/>
    <property type="gene ID" value="WBGene00028889"/>
</dbReference>
<dbReference type="GeneID" id="8589556"/>
<dbReference type="KEGG" id="cbr:CBG_06644"/>
<dbReference type="CTD" id="8589556"/>
<dbReference type="WormBase" id="CBG06644">
    <property type="protein sequence ID" value="CBP01718"/>
    <property type="gene ID" value="WBGene00028889"/>
</dbReference>
<dbReference type="eggNOG" id="KOG3970">
    <property type="taxonomic scope" value="Eukaryota"/>
</dbReference>
<dbReference type="HOGENOM" id="CLU_075387_0_0_1"/>
<dbReference type="InParanoid" id="A8X2R2"/>
<dbReference type="OMA" id="CEHCMVA"/>
<dbReference type="Proteomes" id="UP000008549">
    <property type="component" value="Unassembled WGS sequence"/>
</dbReference>
<dbReference type="GO" id="GO:0005794">
    <property type="term" value="C:Golgi apparatus"/>
    <property type="evidence" value="ECO:0000318"/>
    <property type="project" value="GO_Central"/>
</dbReference>
<dbReference type="GO" id="GO:0016020">
    <property type="term" value="C:membrane"/>
    <property type="evidence" value="ECO:0007669"/>
    <property type="project" value="UniProtKB-SubCell"/>
</dbReference>
<dbReference type="GO" id="GO:0008270">
    <property type="term" value="F:zinc ion binding"/>
    <property type="evidence" value="ECO:0007669"/>
    <property type="project" value="UniProtKB-KW"/>
</dbReference>
<dbReference type="CDD" id="cd16487">
    <property type="entry name" value="mRING-H2-C3DHC3_ZFPL1"/>
    <property type="match status" value="1"/>
</dbReference>
<dbReference type="Gene3D" id="3.30.40.10">
    <property type="entry name" value="Zinc/RING finger domain, C3HC4 (zinc finger)"/>
    <property type="match status" value="1"/>
</dbReference>
<dbReference type="InterPro" id="IPR039043">
    <property type="entry name" value="ZFPL1"/>
</dbReference>
<dbReference type="InterPro" id="IPR001841">
    <property type="entry name" value="Znf_RING"/>
</dbReference>
<dbReference type="InterPro" id="IPR013083">
    <property type="entry name" value="Znf_RING/FYVE/PHD"/>
</dbReference>
<dbReference type="PANTHER" id="PTHR12981">
    <property type="entry name" value="ZINC FINGER PROTEIN-LIKE 1"/>
    <property type="match status" value="1"/>
</dbReference>
<dbReference type="PANTHER" id="PTHR12981:SF0">
    <property type="entry name" value="ZINC FINGER PROTEIN-LIKE 1"/>
    <property type="match status" value="1"/>
</dbReference>
<dbReference type="SMART" id="SM00184">
    <property type="entry name" value="RING"/>
    <property type="match status" value="1"/>
</dbReference>
<dbReference type="SUPFAM" id="SSF57850">
    <property type="entry name" value="RING/U-box"/>
    <property type="match status" value="1"/>
</dbReference>
<dbReference type="PROSITE" id="PS50089">
    <property type="entry name" value="ZF_RING_2"/>
    <property type="match status" value="1"/>
</dbReference>
<name>ZFPL1_CAEBR</name>
<keyword id="KW-0472">Membrane</keyword>
<keyword id="KW-0479">Metal-binding</keyword>
<keyword id="KW-1185">Reference proteome</keyword>
<keyword id="KW-0812">Transmembrane</keyword>
<keyword id="KW-1133">Transmembrane helix</keyword>
<keyword id="KW-0862">Zinc</keyword>
<keyword id="KW-0863">Zinc-finger</keyword>
<feature type="chain" id="PRO_0000355175" description="Zinc finger protein-like 1 homolog">
    <location>
        <begin position="1"/>
        <end position="319"/>
    </location>
</feature>
<feature type="transmembrane region" description="Helical" evidence="1">
    <location>
        <begin position="264"/>
        <end position="284"/>
    </location>
</feature>
<feature type="zinc finger region" description="B box-type; degenerate">
    <location>
        <begin position="1"/>
        <end position="43"/>
    </location>
</feature>
<feature type="zinc finger region" description="RING-type; atypical" evidence="2">
    <location>
        <begin position="53"/>
        <end position="101"/>
    </location>
</feature>
<feature type="region of interest" description="Disordered" evidence="3">
    <location>
        <begin position="212"/>
        <end position="232"/>
    </location>
</feature>
<feature type="compositionally biased region" description="Basic and acidic residues" evidence="3">
    <location>
        <begin position="219"/>
        <end position="232"/>
    </location>
</feature>
<reference key="1">
    <citation type="journal article" date="2003" name="PLoS Biol.">
        <title>The genome sequence of Caenorhabditis briggsae: a platform for comparative genomics.</title>
        <authorList>
            <person name="Stein L.D."/>
            <person name="Bao Z."/>
            <person name="Blasiar D."/>
            <person name="Blumenthal T."/>
            <person name="Brent M.R."/>
            <person name="Chen N."/>
            <person name="Chinwalla A."/>
            <person name="Clarke L."/>
            <person name="Clee C."/>
            <person name="Coghlan A."/>
            <person name="Coulson A."/>
            <person name="D'Eustachio P."/>
            <person name="Fitch D.H.A."/>
            <person name="Fulton L.A."/>
            <person name="Fulton R.E."/>
            <person name="Griffiths-Jones S."/>
            <person name="Harris T.W."/>
            <person name="Hillier L.W."/>
            <person name="Kamath R."/>
            <person name="Kuwabara P.E."/>
            <person name="Mardis E.R."/>
            <person name="Marra M.A."/>
            <person name="Miner T.L."/>
            <person name="Minx P."/>
            <person name="Mullikin J.C."/>
            <person name="Plumb R.W."/>
            <person name="Rogers J."/>
            <person name="Schein J.E."/>
            <person name="Sohrmann M."/>
            <person name="Spieth J."/>
            <person name="Stajich J.E."/>
            <person name="Wei C."/>
            <person name="Willey D."/>
            <person name="Wilson R.K."/>
            <person name="Durbin R.M."/>
            <person name="Waterston R.H."/>
        </authorList>
    </citation>
    <scope>NUCLEOTIDE SEQUENCE [LARGE SCALE GENOMIC DNA]</scope>
    <source>
        <strain>AF16</strain>
    </source>
</reference>
<evidence type="ECO:0000255" key="1"/>
<evidence type="ECO:0000255" key="2">
    <source>
        <dbReference type="PROSITE-ProRule" id="PRU00175"/>
    </source>
</evidence>
<evidence type="ECO:0000256" key="3">
    <source>
        <dbReference type="SAM" id="MobiDB-lite"/>
    </source>
</evidence>
<evidence type="ECO:0000305" key="4"/>
<accession>A8X2R2</accession>
<proteinExistence type="inferred from homology"/>
<sequence length="319" mass="36298">MGLCKCPKRKVTNLFCYEHRVNVCEFCLVDNHPNCVVQSYLNWLTDQDYDPNCSLCHTTLTQGETIRLNCLHLLHWRCFDDWAASFPPTTAPAGYRCPCCSQEVFPPINEVSPLIEKLREQLKQSNWARNALGLPVLPELNRPVKNIAPIPPPPPPQVKHVSYDDSPAQKEIPIHHNRSETPATHLEMEDTASYSVSNSDVTFARKKNFASESSSDTRPLLRQDRDADNEENKYKRRPTIDWMRGLWRAKHGTGVPEDRTSGRKMAIFVMFLALLALITIITVLKRAGYNGEHSSDPMFDPMANPNIRVAVDDSRLPHL</sequence>
<comment type="subcellular location">
    <subcellularLocation>
        <location evidence="4">Membrane</location>
        <topology evidence="4">Single-pass membrane protein</topology>
    </subcellularLocation>
</comment>
<comment type="similarity">
    <text evidence="4">Belongs to the ZFPL1 family.</text>
</comment>
<organism>
    <name type="scientific">Caenorhabditis briggsae</name>
    <dbReference type="NCBI Taxonomy" id="6238"/>
    <lineage>
        <taxon>Eukaryota</taxon>
        <taxon>Metazoa</taxon>
        <taxon>Ecdysozoa</taxon>
        <taxon>Nematoda</taxon>
        <taxon>Chromadorea</taxon>
        <taxon>Rhabditida</taxon>
        <taxon>Rhabditina</taxon>
        <taxon>Rhabditomorpha</taxon>
        <taxon>Rhabditoidea</taxon>
        <taxon>Rhabditidae</taxon>
        <taxon>Peloderinae</taxon>
        <taxon>Caenorhabditis</taxon>
    </lineage>
</organism>